<comment type="function">
    <text evidence="1">Dirigent proteins impart stereoselectivity on the phenoxy radical-coupling reaction, yielding optically active lignans from two molecules of coniferyl alcohol in the biosynthesis of lignans, flavonolignans, and alkaloids and thus plays a central role in plant secondary metabolism.</text>
</comment>
<comment type="subunit">
    <text evidence="1">Homodimer.</text>
</comment>
<comment type="subcellular location">
    <subcellularLocation>
        <location evidence="1">Secreted</location>
        <location evidence="1">Extracellular space</location>
        <location evidence="1">Apoplast</location>
    </subcellularLocation>
</comment>
<comment type="similarity">
    <text evidence="4">Belongs to the plant dirigent protein family.</text>
</comment>
<reference key="1">
    <citation type="journal article" date="2000" name="Nature">
        <title>Sequence and analysis of chromosome 3 of the plant Arabidopsis thaliana.</title>
        <authorList>
            <person name="Salanoubat M."/>
            <person name="Lemcke K."/>
            <person name="Rieger M."/>
            <person name="Ansorge W."/>
            <person name="Unseld M."/>
            <person name="Fartmann B."/>
            <person name="Valle G."/>
            <person name="Bloecker H."/>
            <person name="Perez-Alonso M."/>
            <person name="Obermaier B."/>
            <person name="Delseny M."/>
            <person name="Boutry M."/>
            <person name="Grivell L.A."/>
            <person name="Mache R."/>
            <person name="Puigdomenech P."/>
            <person name="De Simone V."/>
            <person name="Choisne N."/>
            <person name="Artiguenave F."/>
            <person name="Robert C."/>
            <person name="Brottier P."/>
            <person name="Wincker P."/>
            <person name="Cattolico L."/>
            <person name="Weissenbach J."/>
            <person name="Saurin W."/>
            <person name="Quetier F."/>
            <person name="Schaefer M."/>
            <person name="Mueller-Auer S."/>
            <person name="Gabel C."/>
            <person name="Fuchs M."/>
            <person name="Benes V."/>
            <person name="Wurmbach E."/>
            <person name="Drzonek H."/>
            <person name="Erfle H."/>
            <person name="Jordan N."/>
            <person name="Bangert S."/>
            <person name="Wiedelmann R."/>
            <person name="Kranz H."/>
            <person name="Voss H."/>
            <person name="Holland R."/>
            <person name="Brandt P."/>
            <person name="Nyakatura G."/>
            <person name="Vezzi A."/>
            <person name="D'Angelo M."/>
            <person name="Pallavicini A."/>
            <person name="Toppo S."/>
            <person name="Simionati B."/>
            <person name="Conrad A."/>
            <person name="Hornischer K."/>
            <person name="Kauer G."/>
            <person name="Loehnert T.-H."/>
            <person name="Nordsiek G."/>
            <person name="Reichelt J."/>
            <person name="Scharfe M."/>
            <person name="Schoen O."/>
            <person name="Bargues M."/>
            <person name="Terol J."/>
            <person name="Climent J."/>
            <person name="Navarro P."/>
            <person name="Collado C."/>
            <person name="Perez-Perez A."/>
            <person name="Ottenwaelder B."/>
            <person name="Duchemin D."/>
            <person name="Cooke R."/>
            <person name="Laudie M."/>
            <person name="Berger-Llauro C."/>
            <person name="Purnelle B."/>
            <person name="Masuy D."/>
            <person name="de Haan M."/>
            <person name="Maarse A.C."/>
            <person name="Alcaraz J.-P."/>
            <person name="Cottet A."/>
            <person name="Casacuberta E."/>
            <person name="Monfort A."/>
            <person name="Argiriou A."/>
            <person name="Flores M."/>
            <person name="Liguori R."/>
            <person name="Vitale D."/>
            <person name="Mannhaupt G."/>
            <person name="Haase D."/>
            <person name="Schoof H."/>
            <person name="Rudd S."/>
            <person name="Zaccaria P."/>
            <person name="Mewes H.-W."/>
            <person name="Mayer K.F.X."/>
            <person name="Kaul S."/>
            <person name="Town C.D."/>
            <person name="Koo H.L."/>
            <person name="Tallon L.J."/>
            <person name="Jenkins J."/>
            <person name="Rooney T."/>
            <person name="Rizzo M."/>
            <person name="Walts A."/>
            <person name="Utterback T."/>
            <person name="Fujii C.Y."/>
            <person name="Shea T.P."/>
            <person name="Creasy T.H."/>
            <person name="Haas B."/>
            <person name="Maiti R."/>
            <person name="Wu D."/>
            <person name="Peterson J."/>
            <person name="Van Aken S."/>
            <person name="Pai G."/>
            <person name="Militscher J."/>
            <person name="Sellers P."/>
            <person name="Gill J.E."/>
            <person name="Feldblyum T.V."/>
            <person name="Preuss D."/>
            <person name="Lin X."/>
            <person name="Nierman W.C."/>
            <person name="Salzberg S.L."/>
            <person name="White O."/>
            <person name="Venter J.C."/>
            <person name="Fraser C.M."/>
            <person name="Kaneko T."/>
            <person name="Nakamura Y."/>
            <person name="Sato S."/>
            <person name="Kato T."/>
            <person name="Asamizu E."/>
            <person name="Sasamoto S."/>
            <person name="Kimura T."/>
            <person name="Idesawa K."/>
            <person name="Kawashima K."/>
            <person name="Kishida Y."/>
            <person name="Kiyokawa C."/>
            <person name="Kohara M."/>
            <person name="Matsumoto M."/>
            <person name="Matsuno A."/>
            <person name="Muraki A."/>
            <person name="Nakayama S."/>
            <person name="Nakazaki N."/>
            <person name="Shinpo S."/>
            <person name="Takeuchi C."/>
            <person name="Wada T."/>
            <person name="Watanabe A."/>
            <person name="Yamada M."/>
            <person name="Yasuda M."/>
            <person name="Tabata S."/>
        </authorList>
    </citation>
    <scope>NUCLEOTIDE SEQUENCE [LARGE SCALE GENOMIC DNA]</scope>
    <source>
        <strain>cv. Columbia</strain>
    </source>
</reference>
<reference key="2">
    <citation type="journal article" date="2017" name="Plant J.">
        <title>Araport11: a complete reannotation of the Arabidopsis thaliana reference genome.</title>
        <authorList>
            <person name="Cheng C.Y."/>
            <person name="Krishnakumar V."/>
            <person name="Chan A.P."/>
            <person name="Thibaud-Nissen F."/>
            <person name="Schobel S."/>
            <person name="Town C.D."/>
        </authorList>
    </citation>
    <scope>GENOME REANNOTATION</scope>
    <source>
        <strain>cv. Columbia</strain>
    </source>
</reference>
<reference key="3">
    <citation type="submission" date="2006-07" db="EMBL/GenBank/DDBJ databases">
        <title>Large-scale analysis of RIKEN Arabidopsis full-length (RAFL) cDNAs.</title>
        <authorList>
            <person name="Totoki Y."/>
            <person name="Seki M."/>
            <person name="Ishida J."/>
            <person name="Nakajima M."/>
            <person name="Enju A."/>
            <person name="Kamiya A."/>
            <person name="Narusaka M."/>
            <person name="Shin-i T."/>
            <person name="Nakagawa M."/>
            <person name="Sakamoto N."/>
            <person name="Oishi K."/>
            <person name="Kohara Y."/>
            <person name="Kobayashi M."/>
            <person name="Toyoda A."/>
            <person name="Sakaki Y."/>
            <person name="Sakurai T."/>
            <person name="Iida K."/>
            <person name="Akiyama K."/>
            <person name="Satou M."/>
            <person name="Toyoda T."/>
            <person name="Konagaya A."/>
            <person name="Carninci P."/>
            <person name="Kawai J."/>
            <person name="Hayashizaki Y."/>
            <person name="Shinozaki K."/>
        </authorList>
    </citation>
    <scope>NUCLEOTIDE SEQUENCE [LARGE SCALE MRNA]</scope>
    <source>
        <strain>cv. Columbia</strain>
    </source>
</reference>
<reference key="4">
    <citation type="journal article" date="2007" name="Phytochemistry">
        <title>Dirigent proteins in conifer defense II: Extended gene discovery, phylogeny, and constitutive and stress-induced gene expression in spruce (Picea spp.).</title>
        <authorList>
            <person name="Ralph S.G."/>
            <person name="Jancsik S."/>
            <person name="Bohlmann J."/>
        </authorList>
    </citation>
    <scope>GENE FAMILY</scope>
    <scope>NOMENCLATURE</scope>
</reference>
<evidence type="ECO:0000250" key="1"/>
<evidence type="ECO:0000255" key="2"/>
<evidence type="ECO:0000256" key="3">
    <source>
        <dbReference type="SAM" id="MobiDB-lite"/>
    </source>
</evidence>
<evidence type="ECO:0000305" key="4"/>
<organism>
    <name type="scientific">Arabidopsis thaliana</name>
    <name type="common">Mouse-ear cress</name>
    <dbReference type="NCBI Taxonomy" id="3702"/>
    <lineage>
        <taxon>Eukaryota</taxon>
        <taxon>Viridiplantae</taxon>
        <taxon>Streptophyta</taxon>
        <taxon>Embryophyta</taxon>
        <taxon>Tracheophyta</taxon>
        <taxon>Spermatophyta</taxon>
        <taxon>Magnoliopsida</taxon>
        <taxon>eudicotyledons</taxon>
        <taxon>Gunneridae</taxon>
        <taxon>Pentapetalae</taxon>
        <taxon>rosids</taxon>
        <taxon>malvids</taxon>
        <taxon>Brassicales</taxon>
        <taxon>Brassicaceae</taxon>
        <taxon>Camelineae</taxon>
        <taxon>Arabidopsis</taxon>
    </lineage>
</organism>
<sequence>MAKALSLTIFLFLLIASNVQSARLLDEVQTQPQLVPQVPEEEDDSPQAVTTTPTPIPLPGPATGGPEPILEFFMHDVLGGSHPSARVVTGIVAQTEVNGIPFSKSSNNIFPVDNAVPLVNANSINNLINPNTAPLLTGLSGSQANTVIQNSNGNSQGSLSSNNLPFVTTGQLPPIAALQQLMFGSITVVDDELTEGHELGSAIIGRAQGFYLASSLDGTSQTLSLTVLLHEDHDHHDTLDDAISFFGVHRTASHASHIAVVGGTGRFEHAKGYAVVETLHNQEDQHVTDGHDTILHFSVYLTYYKA</sequence>
<keyword id="KW-0052">Apoplast</keyword>
<keyword id="KW-1185">Reference proteome</keyword>
<keyword id="KW-0964">Secreted</keyword>
<keyword id="KW-0732">Signal</keyword>
<feature type="signal peptide" evidence="2">
    <location>
        <begin position="1"/>
        <end position="21"/>
    </location>
</feature>
<feature type="chain" id="PRO_0000422855" description="Dirigent protein 24">
    <location>
        <begin position="22"/>
        <end position="306"/>
    </location>
</feature>
<feature type="region of interest" description="Disordered" evidence="3">
    <location>
        <begin position="36"/>
        <end position="61"/>
    </location>
</feature>
<feature type="sequence conflict" description="In Ref. 3; BAF00893." evidence="4" ref="3">
    <original>A</original>
    <variation>V</variation>
    <location>
        <position position="177"/>
    </location>
</feature>
<gene>
    <name type="primary">DIR24</name>
    <name type="ordered locus">At3g55230</name>
    <name type="ORF">T26I12.110</name>
</gene>
<name>DIR24_ARATH</name>
<accession>Q9M3C8</accession>
<accession>Q0WPQ6</accession>
<dbReference type="EMBL" id="AL132954">
    <property type="protein sequence ID" value="CAB75757.1"/>
    <property type="molecule type" value="Genomic_DNA"/>
</dbReference>
<dbReference type="EMBL" id="CP002686">
    <property type="protein sequence ID" value="AEE79355.1"/>
    <property type="molecule type" value="Genomic_DNA"/>
</dbReference>
<dbReference type="EMBL" id="AK229006">
    <property type="protein sequence ID" value="BAF00893.1"/>
    <property type="molecule type" value="mRNA"/>
</dbReference>
<dbReference type="PIR" id="T47662">
    <property type="entry name" value="T47662"/>
</dbReference>
<dbReference type="RefSeq" id="NP_191083.1">
    <property type="nucleotide sequence ID" value="NM_115381.3"/>
</dbReference>
<dbReference type="SMR" id="Q9M3C8"/>
<dbReference type="STRING" id="3702.Q9M3C8"/>
<dbReference type="PaxDb" id="3702-AT3G55230.1"/>
<dbReference type="ProteomicsDB" id="224106"/>
<dbReference type="EnsemblPlants" id="AT3G55230.1">
    <property type="protein sequence ID" value="AT3G55230.1"/>
    <property type="gene ID" value="AT3G55230"/>
</dbReference>
<dbReference type="GeneID" id="824689"/>
<dbReference type="Gramene" id="AT3G55230.1">
    <property type="protein sequence ID" value="AT3G55230.1"/>
    <property type="gene ID" value="AT3G55230"/>
</dbReference>
<dbReference type="KEGG" id="ath:AT3G55230"/>
<dbReference type="Araport" id="AT3G55230"/>
<dbReference type="TAIR" id="AT3G55230"/>
<dbReference type="eggNOG" id="ENOG502QQZX">
    <property type="taxonomic scope" value="Eukaryota"/>
</dbReference>
<dbReference type="HOGENOM" id="CLU_059816_0_1_1"/>
<dbReference type="InParanoid" id="Q9M3C8"/>
<dbReference type="OMA" id="QHVTDGH"/>
<dbReference type="OrthoDB" id="1921494at2759"/>
<dbReference type="PhylomeDB" id="Q9M3C8"/>
<dbReference type="PRO" id="PR:Q9M3C8"/>
<dbReference type="Proteomes" id="UP000006548">
    <property type="component" value="Chromosome 3"/>
</dbReference>
<dbReference type="ExpressionAtlas" id="Q9M3C8">
    <property type="expression patterns" value="baseline and differential"/>
</dbReference>
<dbReference type="GO" id="GO:0048046">
    <property type="term" value="C:apoplast"/>
    <property type="evidence" value="ECO:0007669"/>
    <property type="project" value="UniProtKB-SubCell"/>
</dbReference>
<dbReference type="GO" id="GO:0009699">
    <property type="term" value="P:phenylpropanoid biosynthetic process"/>
    <property type="evidence" value="ECO:0007669"/>
    <property type="project" value="UniProtKB-ARBA"/>
</dbReference>
<dbReference type="Gene3D" id="2.40.480.10">
    <property type="entry name" value="Allene oxide cyclase-like"/>
    <property type="match status" value="1"/>
</dbReference>
<dbReference type="InterPro" id="IPR044859">
    <property type="entry name" value="Allene_oxi_cyc_Dirigent"/>
</dbReference>
<dbReference type="InterPro" id="IPR004265">
    <property type="entry name" value="Dirigent"/>
</dbReference>
<dbReference type="PANTHER" id="PTHR46215:SF15">
    <property type="entry name" value="DIRIGENT PROTEIN 24"/>
    <property type="match status" value="1"/>
</dbReference>
<dbReference type="PANTHER" id="PTHR46215">
    <property type="entry name" value="DIRIGENT PROTEIN 24-RELATED"/>
    <property type="match status" value="1"/>
</dbReference>
<dbReference type="Pfam" id="PF03018">
    <property type="entry name" value="Dirigent"/>
    <property type="match status" value="1"/>
</dbReference>
<proteinExistence type="evidence at transcript level"/>
<protein>
    <recommendedName>
        <fullName>Dirigent protein 24</fullName>
        <shortName>AtDIR24</shortName>
    </recommendedName>
</protein>